<proteinExistence type="inferred from homology"/>
<sequence>MQDVKTYLSTAPVLATLWFGFLAGLLIEINRFFPDALVSPLF</sequence>
<keyword id="KW-0150">Chloroplast</keyword>
<keyword id="KW-0472">Membrane</keyword>
<keyword id="KW-0602">Photosynthesis</keyword>
<keyword id="KW-0603">Photosystem I</keyword>
<keyword id="KW-0934">Plastid</keyword>
<keyword id="KW-0793">Thylakoid</keyword>
<keyword id="KW-0812">Transmembrane</keyword>
<keyword id="KW-1133">Transmembrane helix</keyword>
<name>PSAJ_PSINU</name>
<protein>
    <recommendedName>
        <fullName evidence="1">Photosystem I reaction center subunit IX</fullName>
    </recommendedName>
    <alternativeName>
        <fullName evidence="1">PSI-J</fullName>
    </alternativeName>
</protein>
<accession>Q8WI01</accession>
<comment type="function">
    <text evidence="1">May help in the organization of the PsaE and PsaF subunits.</text>
</comment>
<comment type="subcellular location">
    <subcellularLocation>
        <location evidence="1">Plastid</location>
        <location evidence="1">Chloroplast thylakoid membrane</location>
        <topology evidence="1">Single-pass membrane protein</topology>
    </subcellularLocation>
</comment>
<comment type="similarity">
    <text evidence="1">Belongs to the PsaJ family.</text>
</comment>
<evidence type="ECO:0000255" key="1">
    <source>
        <dbReference type="HAMAP-Rule" id="MF_00522"/>
    </source>
</evidence>
<organism>
    <name type="scientific">Psilotum nudum</name>
    <name type="common">Whisk fern</name>
    <name type="synonym">Lycopodium nudum</name>
    <dbReference type="NCBI Taxonomy" id="3240"/>
    <lineage>
        <taxon>Eukaryota</taxon>
        <taxon>Viridiplantae</taxon>
        <taxon>Streptophyta</taxon>
        <taxon>Embryophyta</taxon>
        <taxon>Tracheophyta</taxon>
        <taxon>Polypodiopsida</taxon>
        <taxon>Ophioglossidae</taxon>
        <taxon>Psilotales</taxon>
        <taxon>Psilotaceae</taxon>
        <taxon>Psilotum</taxon>
    </lineage>
</organism>
<geneLocation type="chloroplast"/>
<dbReference type="EMBL" id="AP004638">
    <property type="protein sequence ID" value="BAB84236.1"/>
    <property type="molecule type" value="Genomic_DNA"/>
</dbReference>
<dbReference type="RefSeq" id="NP_569649.1">
    <property type="nucleotide sequence ID" value="NC_003386.1"/>
</dbReference>
<dbReference type="SMR" id="Q8WI01"/>
<dbReference type="GeneID" id="2545137"/>
<dbReference type="GO" id="GO:0009535">
    <property type="term" value="C:chloroplast thylakoid membrane"/>
    <property type="evidence" value="ECO:0007669"/>
    <property type="project" value="UniProtKB-SubCell"/>
</dbReference>
<dbReference type="GO" id="GO:0009522">
    <property type="term" value="C:photosystem I"/>
    <property type="evidence" value="ECO:0007669"/>
    <property type="project" value="UniProtKB-KW"/>
</dbReference>
<dbReference type="GO" id="GO:0015979">
    <property type="term" value="P:photosynthesis"/>
    <property type="evidence" value="ECO:0007669"/>
    <property type="project" value="UniProtKB-UniRule"/>
</dbReference>
<dbReference type="Gene3D" id="1.20.5.510">
    <property type="entry name" value="Single helix bin"/>
    <property type="match status" value="1"/>
</dbReference>
<dbReference type="HAMAP" id="MF_00522">
    <property type="entry name" value="PSI_PsaJ"/>
    <property type="match status" value="1"/>
</dbReference>
<dbReference type="InterPro" id="IPR002615">
    <property type="entry name" value="PSI_PsaJ"/>
</dbReference>
<dbReference type="InterPro" id="IPR036062">
    <property type="entry name" value="PSI_PsaJ_sf"/>
</dbReference>
<dbReference type="PANTHER" id="PTHR36082">
    <property type="match status" value="1"/>
</dbReference>
<dbReference type="PANTHER" id="PTHR36082:SF2">
    <property type="entry name" value="PHOTOSYSTEM I REACTION CENTER SUBUNIT IX"/>
    <property type="match status" value="1"/>
</dbReference>
<dbReference type="Pfam" id="PF01701">
    <property type="entry name" value="PSI_PsaJ"/>
    <property type="match status" value="1"/>
</dbReference>
<dbReference type="SUPFAM" id="SSF81544">
    <property type="entry name" value="Subunit IX of photosystem I reaction centre, PsaJ"/>
    <property type="match status" value="1"/>
</dbReference>
<feature type="chain" id="PRO_0000207813" description="Photosystem I reaction center subunit IX">
    <location>
        <begin position="1"/>
        <end position="42"/>
    </location>
</feature>
<feature type="transmembrane region" description="Helical" evidence="1">
    <location>
        <begin position="7"/>
        <end position="27"/>
    </location>
</feature>
<gene>
    <name evidence="1" type="primary">psaJ</name>
</gene>
<reference key="1">
    <citation type="journal article" date="2004" name="Mol. Biol. Evol.">
        <title>Chloroplast phylogeny indicates that bryophytes are monophyletic.</title>
        <authorList>
            <person name="Nishiyama T."/>
            <person name="Wolf P.G."/>
            <person name="Kugita M."/>
            <person name="Sinclair R.B."/>
            <person name="Sugita M."/>
            <person name="Sugiura C."/>
            <person name="Wakasugi T."/>
            <person name="Yamada K."/>
            <person name="Yoshinaga K."/>
            <person name="Yamaguchi K."/>
            <person name="Ueda K."/>
            <person name="Hasebe M."/>
        </authorList>
    </citation>
    <scope>NUCLEOTIDE SEQUENCE [LARGE SCALE GENOMIC DNA]</scope>
    <source>
        <strain>Kingyoku</strain>
    </source>
</reference>